<dbReference type="EC" id="3.4.11.1" evidence="1"/>
<dbReference type="EC" id="3.4.11.10" evidence="1"/>
<dbReference type="EMBL" id="CP001087">
    <property type="protein sequence ID" value="ACN17103.1"/>
    <property type="molecule type" value="Genomic_DNA"/>
</dbReference>
<dbReference type="RefSeq" id="WP_015905837.1">
    <property type="nucleotide sequence ID" value="NC_012108.1"/>
</dbReference>
<dbReference type="SMR" id="C0QC86"/>
<dbReference type="STRING" id="177437.HRM2_40450"/>
<dbReference type="KEGG" id="dat:HRM2_40450"/>
<dbReference type="eggNOG" id="COG0260">
    <property type="taxonomic scope" value="Bacteria"/>
</dbReference>
<dbReference type="HOGENOM" id="CLU_013734_2_2_7"/>
<dbReference type="OrthoDB" id="9809354at2"/>
<dbReference type="Proteomes" id="UP000000442">
    <property type="component" value="Chromosome"/>
</dbReference>
<dbReference type="GO" id="GO:0005737">
    <property type="term" value="C:cytoplasm"/>
    <property type="evidence" value="ECO:0007669"/>
    <property type="project" value="UniProtKB-SubCell"/>
</dbReference>
<dbReference type="GO" id="GO:0030145">
    <property type="term" value="F:manganese ion binding"/>
    <property type="evidence" value="ECO:0007669"/>
    <property type="project" value="UniProtKB-UniRule"/>
</dbReference>
<dbReference type="GO" id="GO:0070006">
    <property type="term" value="F:metalloaminopeptidase activity"/>
    <property type="evidence" value="ECO:0007669"/>
    <property type="project" value="InterPro"/>
</dbReference>
<dbReference type="GO" id="GO:0006508">
    <property type="term" value="P:proteolysis"/>
    <property type="evidence" value="ECO:0007669"/>
    <property type="project" value="UniProtKB-KW"/>
</dbReference>
<dbReference type="CDD" id="cd00433">
    <property type="entry name" value="Peptidase_M17"/>
    <property type="match status" value="1"/>
</dbReference>
<dbReference type="Gene3D" id="3.40.220.10">
    <property type="entry name" value="Leucine Aminopeptidase, subunit E, domain 1"/>
    <property type="match status" value="1"/>
</dbReference>
<dbReference type="Gene3D" id="3.40.630.10">
    <property type="entry name" value="Zn peptidases"/>
    <property type="match status" value="1"/>
</dbReference>
<dbReference type="HAMAP" id="MF_00181">
    <property type="entry name" value="Cytosol_peptidase_M17"/>
    <property type="match status" value="1"/>
</dbReference>
<dbReference type="InterPro" id="IPR011356">
    <property type="entry name" value="Leucine_aapep/pepB"/>
</dbReference>
<dbReference type="InterPro" id="IPR043472">
    <property type="entry name" value="Macro_dom-like"/>
</dbReference>
<dbReference type="InterPro" id="IPR000819">
    <property type="entry name" value="Peptidase_M17_C"/>
</dbReference>
<dbReference type="InterPro" id="IPR023042">
    <property type="entry name" value="Peptidase_M17_leu_NH2_pept"/>
</dbReference>
<dbReference type="InterPro" id="IPR008283">
    <property type="entry name" value="Peptidase_M17_N"/>
</dbReference>
<dbReference type="NCBIfam" id="NF002073">
    <property type="entry name" value="PRK00913.1-2"/>
    <property type="match status" value="1"/>
</dbReference>
<dbReference type="PANTHER" id="PTHR11963:SF23">
    <property type="entry name" value="CYTOSOL AMINOPEPTIDASE"/>
    <property type="match status" value="1"/>
</dbReference>
<dbReference type="PANTHER" id="PTHR11963">
    <property type="entry name" value="LEUCINE AMINOPEPTIDASE-RELATED"/>
    <property type="match status" value="1"/>
</dbReference>
<dbReference type="Pfam" id="PF00883">
    <property type="entry name" value="Peptidase_M17"/>
    <property type="match status" value="1"/>
</dbReference>
<dbReference type="Pfam" id="PF02789">
    <property type="entry name" value="Peptidase_M17_N"/>
    <property type="match status" value="1"/>
</dbReference>
<dbReference type="PRINTS" id="PR00481">
    <property type="entry name" value="LAMNOPPTDASE"/>
</dbReference>
<dbReference type="SUPFAM" id="SSF52949">
    <property type="entry name" value="Macro domain-like"/>
    <property type="match status" value="1"/>
</dbReference>
<dbReference type="SUPFAM" id="SSF53187">
    <property type="entry name" value="Zn-dependent exopeptidases"/>
    <property type="match status" value="1"/>
</dbReference>
<dbReference type="PROSITE" id="PS00631">
    <property type="entry name" value="CYTOSOL_AP"/>
    <property type="match status" value="1"/>
</dbReference>
<feature type="chain" id="PRO_1000203825" description="Probable cytosol aminopeptidase">
    <location>
        <begin position="1"/>
        <end position="515"/>
    </location>
</feature>
<feature type="active site" evidence="1">
    <location>
        <position position="286"/>
    </location>
</feature>
<feature type="active site" evidence="1">
    <location>
        <position position="360"/>
    </location>
</feature>
<feature type="binding site" evidence="1">
    <location>
        <position position="274"/>
    </location>
    <ligand>
        <name>Mn(2+)</name>
        <dbReference type="ChEBI" id="CHEBI:29035"/>
        <label>2</label>
    </ligand>
</feature>
<feature type="binding site" evidence="1">
    <location>
        <position position="279"/>
    </location>
    <ligand>
        <name>Mn(2+)</name>
        <dbReference type="ChEBI" id="CHEBI:29035"/>
        <label>1</label>
    </ligand>
</feature>
<feature type="binding site" evidence="1">
    <location>
        <position position="279"/>
    </location>
    <ligand>
        <name>Mn(2+)</name>
        <dbReference type="ChEBI" id="CHEBI:29035"/>
        <label>2</label>
    </ligand>
</feature>
<feature type="binding site" evidence="1">
    <location>
        <position position="297"/>
    </location>
    <ligand>
        <name>Mn(2+)</name>
        <dbReference type="ChEBI" id="CHEBI:29035"/>
        <label>2</label>
    </ligand>
</feature>
<feature type="binding site" evidence="1">
    <location>
        <position position="356"/>
    </location>
    <ligand>
        <name>Mn(2+)</name>
        <dbReference type="ChEBI" id="CHEBI:29035"/>
        <label>1</label>
    </ligand>
</feature>
<feature type="binding site" evidence="1">
    <location>
        <position position="358"/>
    </location>
    <ligand>
        <name>Mn(2+)</name>
        <dbReference type="ChEBI" id="CHEBI:29035"/>
        <label>1</label>
    </ligand>
</feature>
<feature type="binding site" evidence="1">
    <location>
        <position position="358"/>
    </location>
    <ligand>
        <name>Mn(2+)</name>
        <dbReference type="ChEBI" id="CHEBI:29035"/>
        <label>2</label>
    </ligand>
</feature>
<gene>
    <name evidence="1" type="primary">pepA</name>
    <name type="ordered locus">HRM2_40450</name>
</gene>
<proteinExistence type="inferred from homology"/>
<protein>
    <recommendedName>
        <fullName evidence="1">Probable cytosol aminopeptidase</fullName>
        <ecNumber evidence="1">3.4.11.1</ecNumber>
    </recommendedName>
    <alternativeName>
        <fullName evidence="1">Leucine aminopeptidase</fullName>
        <shortName evidence="1">LAP</shortName>
        <ecNumber evidence="1">3.4.11.10</ecNumber>
    </alternativeName>
    <alternativeName>
        <fullName evidence="1">Leucyl aminopeptidase</fullName>
    </alternativeName>
</protein>
<name>AMPA_DESAH</name>
<evidence type="ECO:0000255" key="1">
    <source>
        <dbReference type="HAMAP-Rule" id="MF_00181"/>
    </source>
</evidence>
<reference key="1">
    <citation type="journal article" date="2009" name="Environ. Microbiol.">
        <title>Genome sequence of Desulfobacterium autotrophicum HRM2, a marine sulfate reducer oxidizing organic carbon completely to carbon dioxide.</title>
        <authorList>
            <person name="Strittmatter A.W."/>
            <person name="Liesegang H."/>
            <person name="Rabus R."/>
            <person name="Decker I."/>
            <person name="Amann J."/>
            <person name="Andres S."/>
            <person name="Henne A."/>
            <person name="Fricke W.F."/>
            <person name="Martinez-Arias R."/>
            <person name="Bartels D."/>
            <person name="Goesmann A."/>
            <person name="Krause L."/>
            <person name="Puehler A."/>
            <person name="Klenk H.P."/>
            <person name="Richter M."/>
            <person name="Schuler M."/>
            <person name="Gloeckner F.O."/>
            <person name="Meyerdierks A."/>
            <person name="Gottschalk G."/>
            <person name="Amann R."/>
        </authorList>
    </citation>
    <scope>NUCLEOTIDE SEQUENCE [LARGE SCALE GENOMIC DNA]</scope>
    <source>
        <strain>ATCC 43914 / DSM 3382 / VKM B-1955 / HRM2</strain>
    </source>
</reference>
<comment type="function">
    <text evidence="1">Presumably involved in the processing and regular turnover of intracellular proteins. Catalyzes the removal of unsubstituted N-terminal amino acids from various peptides.</text>
</comment>
<comment type="catalytic activity">
    <reaction evidence="1">
        <text>Release of an N-terminal amino acid, Xaa-|-Yaa-, in which Xaa is preferably Leu, but may be other amino acids including Pro although not Arg or Lys, and Yaa may be Pro. Amino acid amides and methyl esters are also readily hydrolyzed, but rates on arylamides are exceedingly low.</text>
        <dbReference type="EC" id="3.4.11.1"/>
    </reaction>
</comment>
<comment type="catalytic activity">
    <reaction evidence="1">
        <text>Release of an N-terminal amino acid, preferentially leucine, but not glutamic or aspartic acids.</text>
        <dbReference type="EC" id="3.4.11.10"/>
    </reaction>
</comment>
<comment type="cofactor">
    <cofactor evidence="1">
        <name>Mn(2+)</name>
        <dbReference type="ChEBI" id="CHEBI:29035"/>
    </cofactor>
    <text evidence="1">Binds 2 manganese ions per subunit.</text>
</comment>
<comment type="subcellular location">
    <subcellularLocation>
        <location evidence="1">Cytoplasm</location>
    </subcellularLocation>
</comment>
<comment type="similarity">
    <text evidence="1">Belongs to the peptidase M17 family.</text>
</comment>
<keyword id="KW-0031">Aminopeptidase</keyword>
<keyword id="KW-0963">Cytoplasm</keyword>
<keyword id="KW-0378">Hydrolase</keyword>
<keyword id="KW-0464">Manganese</keyword>
<keyword id="KW-0479">Metal-binding</keyword>
<keyword id="KW-0645">Protease</keyword>
<keyword id="KW-1185">Reference proteome</keyword>
<sequence length="515" mass="54813">MTTAQFAVNLNMEGLKGDLLVFCVNQAKERGKIVCHNLVDAQVRAAFDLGDFSGKEGETLLLYPFHSTELSVAGAARILVLGVGDSSDQKEPGGVRDLFRRAGGCIAGQCELLKVETLMVALPETPFLDPGQTAECLVEGICLGDYRFVRYKQPESKEREYLGLKQVFLVSGKTDPAVEKGMDLGRRAALAACEARNMANEPANIWTASAFAAFAQTLAKAHSLGCRILEKSDMERLGMGGILAVNQGSGEPPKLVVLEYLPENRSETLLLVGKGVTFDSGGISLKPAPGMEKMKYDMCGGAAVLCAMQAVAEERPHVGVVAIVPATDNLSGGLAVKPGDVIRHFNGKTAEIVNTDAEGRMILADALAWGINEYNPCCVVDLATLTGAVVMGLGHHYSGIMGNNDALARCLEDAGEKAGEPLWRLPLGKAYAKQIESKVADIKNIGGKSAGAITAAAYLENFVGDTPWVHMDIAGTAWDFTEKTYIPKDGPSGIGVRTLVSLIRNWQPGTIVSSR</sequence>
<accession>C0QC86</accession>
<organism>
    <name type="scientific">Desulforapulum autotrophicum (strain ATCC 43914 / DSM 3382 / VKM B-1955 / HRM2)</name>
    <name type="common">Desulfobacterium autotrophicum</name>
    <dbReference type="NCBI Taxonomy" id="177437"/>
    <lineage>
        <taxon>Bacteria</taxon>
        <taxon>Pseudomonadati</taxon>
        <taxon>Thermodesulfobacteriota</taxon>
        <taxon>Desulfobacteria</taxon>
        <taxon>Desulfobacterales</taxon>
        <taxon>Desulfobacteraceae</taxon>
        <taxon>Desulforapulum</taxon>
    </lineage>
</organism>